<dbReference type="EC" id="2.3.2.23"/>
<dbReference type="EMBL" id="X72625">
    <property type="protein sequence ID" value="CAA51200.1"/>
    <property type="molecule type" value="mRNA"/>
</dbReference>
<dbReference type="EMBL" id="U33759">
    <property type="protein sequence ID" value="AAC49323.1"/>
    <property type="molecule type" value="Genomic_DNA"/>
</dbReference>
<dbReference type="EMBL" id="DQ027028">
    <property type="protein sequence ID" value="AAY44854.1"/>
    <property type="molecule type" value="mRNA"/>
</dbReference>
<dbReference type="EMBL" id="AL132975">
    <property type="protein sequence ID" value="CAB75896.1"/>
    <property type="molecule type" value="Genomic_DNA"/>
</dbReference>
<dbReference type="EMBL" id="CP002686">
    <property type="protein sequence ID" value="AEE79376.1"/>
    <property type="molecule type" value="Genomic_DNA"/>
</dbReference>
<dbReference type="EMBL" id="AY117262">
    <property type="protein sequence ID" value="AAM51337.1"/>
    <property type="molecule type" value="mRNA"/>
</dbReference>
<dbReference type="EMBL" id="AY045883">
    <property type="protein sequence ID" value="AAK76557.1"/>
    <property type="molecule type" value="mRNA"/>
</dbReference>
<dbReference type="EMBL" id="AY086490">
    <property type="protein sequence ID" value="AAM63492.1"/>
    <property type="molecule type" value="mRNA"/>
</dbReference>
<dbReference type="EMBL" id="Z18513">
    <property type="protein sequence ID" value="CAA79212.1"/>
    <property type="molecule type" value="mRNA"/>
</dbReference>
<dbReference type="PIR" id="S46656">
    <property type="entry name" value="S46656"/>
</dbReference>
<dbReference type="RefSeq" id="NP_567020.1">
    <molecule id="P42747-1"/>
    <property type="nucleotide sequence ID" value="NM_115396.4"/>
</dbReference>
<dbReference type="SMR" id="P42747"/>
<dbReference type="BioGRID" id="10020">
    <property type="interactions" value="1"/>
</dbReference>
<dbReference type="FunCoup" id="P42747">
    <property type="interactions" value="3711"/>
</dbReference>
<dbReference type="STRING" id="3702.P42747"/>
<dbReference type="iPTMnet" id="P42747"/>
<dbReference type="ProteomicsDB" id="242593">
    <molecule id="P42747-1"/>
</dbReference>
<dbReference type="EnsemblPlants" id="AT3G55380.1">
    <molecule id="P42747-1"/>
    <property type="protein sequence ID" value="AT3G55380.1"/>
    <property type="gene ID" value="AT3G55380"/>
</dbReference>
<dbReference type="GeneID" id="824704"/>
<dbReference type="Gramene" id="AT3G55380.1">
    <molecule id="P42747-1"/>
    <property type="protein sequence ID" value="AT3G55380.1"/>
    <property type="gene ID" value="AT3G55380"/>
</dbReference>
<dbReference type="KEGG" id="ath:AT3G55380"/>
<dbReference type="Araport" id="AT3G55380"/>
<dbReference type="TAIR" id="AT3G55380">
    <property type="gene designation" value="UBC14"/>
</dbReference>
<dbReference type="HOGENOM" id="CLU_030988_10_1_1"/>
<dbReference type="InParanoid" id="P42747"/>
<dbReference type="OMA" id="EWREEYT"/>
<dbReference type="OrthoDB" id="19692at2759"/>
<dbReference type="PhylomeDB" id="P42747"/>
<dbReference type="UniPathway" id="UPA00143"/>
<dbReference type="PRO" id="PR:P42747"/>
<dbReference type="Proteomes" id="UP000006548">
    <property type="component" value="Chromosome 3"/>
</dbReference>
<dbReference type="ExpressionAtlas" id="P42747">
    <property type="expression patterns" value="baseline and differential"/>
</dbReference>
<dbReference type="GO" id="GO:0005524">
    <property type="term" value="F:ATP binding"/>
    <property type="evidence" value="ECO:0007669"/>
    <property type="project" value="UniProtKB-KW"/>
</dbReference>
<dbReference type="GO" id="GO:0061631">
    <property type="term" value="F:ubiquitin conjugating enzyme activity"/>
    <property type="evidence" value="ECO:0007669"/>
    <property type="project" value="UniProtKB-EC"/>
</dbReference>
<dbReference type="GO" id="GO:0016567">
    <property type="term" value="P:protein ubiquitination"/>
    <property type="evidence" value="ECO:0007669"/>
    <property type="project" value="UniProtKB-UniPathway"/>
</dbReference>
<dbReference type="CDD" id="cd23795">
    <property type="entry name" value="UBCc_UBE2G1"/>
    <property type="match status" value="1"/>
</dbReference>
<dbReference type="FunFam" id="3.10.110.10:FF:000025">
    <property type="entry name" value="ubiquitin-conjugating enzyme E2 7"/>
    <property type="match status" value="1"/>
</dbReference>
<dbReference type="Gene3D" id="3.10.110.10">
    <property type="entry name" value="Ubiquitin Conjugating Enzyme"/>
    <property type="match status" value="1"/>
</dbReference>
<dbReference type="InterPro" id="IPR050113">
    <property type="entry name" value="Ub_conjugating_enzyme"/>
</dbReference>
<dbReference type="InterPro" id="IPR000608">
    <property type="entry name" value="UBQ-conjugat_E2_core"/>
</dbReference>
<dbReference type="InterPro" id="IPR023313">
    <property type="entry name" value="UBQ-conjugating_AS"/>
</dbReference>
<dbReference type="InterPro" id="IPR016135">
    <property type="entry name" value="UBQ-conjugating_enzyme/RWD"/>
</dbReference>
<dbReference type="PANTHER" id="PTHR24067">
    <property type="entry name" value="UBIQUITIN-CONJUGATING ENZYME E2"/>
    <property type="match status" value="1"/>
</dbReference>
<dbReference type="Pfam" id="PF00179">
    <property type="entry name" value="UQ_con"/>
    <property type="match status" value="1"/>
</dbReference>
<dbReference type="SMART" id="SM00212">
    <property type="entry name" value="UBCc"/>
    <property type="match status" value="1"/>
</dbReference>
<dbReference type="SUPFAM" id="SSF54495">
    <property type="entry name" value="UBC-like"/>
    <property type="match status" value="1"/>
</dbReference>
<dbReference type="PROSITE" id="PS00183">
    <property type="entry name" value="UBC_1"/>
    <property type="match status" value="1"/>
</dbReference>
<dbReference type="PROSITE" id="PS50127">
    <property type="entry name" value="UBC_2"/>
    <property type="match status" value="1"/>
</dbReference>
<accession>P42747</accession>
<accession>Q4TYZ6</accession>
<comment type="function">
    <text evidence="4">Accepts the ubiquitin from the E1 complex and catalyzes its covalent attachment to other proteins. Involved in the formation of multiubiquitin chains. Signal the protein for selective degradation.</text>
</comment>
<comment type="catalytic activity">
    <reaction evidence="1 2">
        <text>S-ubiquitinyl-[E1 ubiquitin-activating enzyme]-L-cysteine + [E2 ubiquitin-conjugating enzyme]-L-cysteine = [E1 ubiquitin-activating enzyme]-L-cysteine + S-ubiquitinyl-[E2 ubiquitin-conjugating enzyme]-L-cysteine.</text>
        <dbReference type="EC" id="2.3.2.23"/>
    </reaction>
</comment>
<comment type="pathway">
    <text evidence="1">Protein modification; protein ubiquitination.</text>
</comment>
<comment type="alternative products">
    <event type="alternative splicing"/>
    <isoform>
        <id>P42747-1</id>
        <name>1</name>
        <sequence type="displayed"/>
    </isoform>
    <text>A number of isoforms are produced. According to EST sequences.</text>
</comment>
<comment type="developmental stage">
    <text evidence="3">Up-regulated during the G0 to S phase transition.</text>
</comment>
<comment type="similarity">
    <text evidence="1">Belongs to the ubiquitin-conjugating enzyme family.</text>
</comment>
<gene>
    <name type="primary">UBC14</name>
    <name type="synonym">UBC3</name>
    <name type="synonym">UBC7</name>
    <name type="ordered locus">At3g55380</name>
    <name type="ORF">T22E16.40</name>
</gene>
<sequence>MANNQASLLLQKQLKDLCKKPVDGFSAGLVDEKNVFQWSVSIMGPPDTLYEGGFFNAIMSFPENYPVSPPTVTFTSEMWHPNVYSDGKVCISILHPPGDDPHGYELASERWTPVHTVESIVLSIISMLSGPNDESPANVEAAKEWRDNRAEFRKKVSRCVRRSQEML</sequence>
<reference key="1">
    <citation type="journal article" date="1994" name="Mol. Gen. Genet.">
        <title>Differential expression of several E2-type ubiquitin carrier protein genes at different developmental stages in Arabidopsis thaliana and Nicotiana sylvestris.</title>
        <authorList>
            <person name="Genschik P."/>
            <person name="Durr A."/>
            <person name="Fleck J."/>
        </authorList>
    </citation>
    <scope>NUCLEOTIDE SEQUENCE [MRNA]</scope>
    <scope>DEVELOPMENTAL STAGE</scope>
    <source>
        <strain>cv. Columbia</strain>
    </source>
</reference>
<reference key="2">
    <citation type="journal article" date="1996" name="J. Biol. Chem.">
        <title>The Arabidopsis thaliana UBC7/13/14 genes encode a family of multiubiquitin chain-forming E2 enzymes.</title>
        <authorList>
            <person name="van Nocker S."/>
            <person name="Walker J.M."/>
            <person name="Vierstra R.D."/>
        </authorList>
    </citation>
    <scope>NUCLEOTIDE SEQUENCE [GENOMIC DNA]</scope>
    <scope>FUNCTION</scope>
    <source>
        <strain>cv. Columbia</strain>
    </source>
</reference>
<reference key="3">
    <citation type="journal article" date="2005" name="Plant Physiol.">
        <title>Genome analysis and functional characterization of the E2 and RING-type E3 ligase ubiquitination enzymes of Arabidopsis.</title>
        <authorList>
            <person name="Kraft E."/>
            <person name="Stone S.L."/>
            <person name="Ma L."/>
            <person name="Su N."/>
            <person name="Gao Y."/>
            <person name="Lau O.-S."/>
            <person name="Deng X.-W."/>
            <person name="Callis J."/>
        </authorList>
    </citation>
    <scope>NUCLEOTIDE SEQUENCE [MRNA]</scope>
    <scope>GENE FAMILY</scope>
    <scope>NOMENCLATURE</scope>
</reference>
<reference key="4">
    <citation type="journal article" date="2000" name="Nature">
        <title>Sequence and analysis of chromosome 3 of the plant Arabidopsis thaliana.</title>
        <authorList>
            <person name="Salanoubat M."/>
            <person name="Lemcke K."/>
            <person name="Rieger M."/>
            <person name="Ansorge W."/>
            <person name="Unseld M."/>
            <person name="Fartmann B."/>
            <person name="Valle G."/>
            <person name="Bloecker H."/>
            <person name="Perez-Alonso M."/>
            <person name="Obermaier B."/>
            <person name="Delseny M."/>
            <person name="Boutry M."/>
            <person name="Grivell L.A."/>
            <person name="Mache R."/>
            <person name="Puigdomenech P."/>
            <person name="De Simone V."/>
            <person name="Choisne N."/>
            <person name="Artiguenave F."/>
            <person name="Robert C."/>
            <person name="Brottier P."/>
            <person name="Wincker P."/>
            <person name="Cattolico L."/>
            <person name="Weissenbach J."/>
            <person name="Saurin W."/>
            <person name="Quetier F."/>
            <person name="Schaefer M."/>
            <person name="Mueller-Auer S."/>
            <person name="Gabel C."/>
            <person name="Fuchs M."/>
            <person name="Benes V."/>
            <person name="Wurmbach E."/>
            <person name="Drzonek H."/>
            <person name="Erfle H."/>
            <person name="Jordan N."/>
            <person name="Bangert S."/>
            <person name="Wiedelmann R."/>
            <person name="Kranz H."/>
            <person name="Voss H."/>
            <person name="Holland R."/>
            <person name="Brandt P."/>
            <person name="Nyakatura G."/>
            <person name="Vezzi A."/>
            <person name="D'Angelo M."/>
            <person name="Pallavicini A."/>
            <person name="Toppo S."/>
            <person name="Simionati B."/>
            <person name="Conrad A."/>
            <person name="Hornischer K."/>
            <person name="Kauer G."/>
            <person name="Loehnert T.-H."/>
            <person name="Nordsiek G."/>
            <person name="Reichelt J."/>
            <person name="Scharfe M."/>
            <person name="Schoen O."/>
            <person name="Bargues M."/>
            <person name="Terol J."/>
            <person name="Climent J."/>
            <person name="Navarro P."/>
            <person name="Collado C."/>
            <person name="Perez-Perez A."/>
            <person name="Ottenwaelder B."/>
            <person name="Duchemin D."/>
            <person name="Cooke R."/>
            <person name="Laudie M."/>
            <person name="Berger-Llauro C."/>
            <person name="Purnelle B."/>
            <person name="Masuy D."/>
            <person name="de Haan M."/>
            <person name="Maarse A.C."/>
            <person name="Alcaraz J.-P."/>
            <person name="Cottet A."/>
            <person name="Casacuberta E."/>
            <person name="Monfort A."/>
            <person name="Argiriou A."/>
            <person name="Flores M."/>
            <person name="Liguori R."/>
            <person name="Vitale D."/>
            <person name="Mannhaupt G."/>
            <person name="Haase D."/>
            <person name="Schoof H."/>
            <person name="Rudd S."/>
            <person name="Zaccaria P."/>
            <person name="Mewes H.-W."/>
            <person name="Mayer K.F.X."/>
            <person name="Kaul S."/>
            <person name="Town C.D."/>
            <person name="Koo H.L."/>
            <person name="Tallon L.J."/>
            <person name="Jenkins J."/>
            <person name="Rooney T."/>
            <person name="Rizzo M."/>
            <person name="Walts A."/>
            <person name="Utterback T."/>
            <person name="Fujii C.Y."/>
            <person name="Shea T.P."/>
            <person name="Creasy T.H."/>
            <person name="Haas B."/>
            <person name="Maiti R."/>
            <person name="Wu D."/>
            <person name="Peterson J."/>
            <person name="Van Aken S."/>
            <person name="Pai G."/>
            <person name="Militscher J."/>
            <person name="Sellers P."/>
            <person name="Gill J.E."/>
            <person name="Feldblyum T.V."/>
            <person name="Preuss D."/>
            <person name="Lin X."/>
            <person name="Nierman W.C."/>
            <person name="Salzberg S.L."/>
            <person name="White O."/>
            <person name="Venter J.C."/>
            <person name="Fraser C.M."/>
            <person name="Kaneko T."/>
            <person name="Nakamura Y."/>
            <person name="Sato S."/>
            <person name="Kato T."/>
            <person name="Asamizu E."/>
            <person name="Sasamoto S."/>
            <person name="Kimura T."/>
            <person name="Idesawa K."/>
            <person name="Kawashima K."/>
            <person name="Kishida Y."/>
            <person name="Kiyokawa C."/>
            <person name="Kohara M."/>
            <person name="Matsumoto M."/>
            <person name="Matsuno A."/>
            <person name="Muraki A."/>
            <person name="Nakayama S."/>
            <person name="Nakazaki N."/>
            <person name="Shinpo S."/>
            <person name="Takeuchi C."/>
            <person name="Wada T."/>
            <person name="Watanabe A."/>
            <person name="Yamada M."/>
            <person name="Yasuda M."/>
            <person name="Tabata S."/>
        </authorList>
    </citation>
    <scope>NUCLEOTIDE SEQUENCE [LARGE SCALE GENOMIC DNA]</scope>
    <source>
        <strain>cv. Columbia</strain>
    </source>
</reference>
<reference key="5">
    <citation type="journal article" date="2017" name="Plant J.">
        <title>Araport11: a complete reannotation of the Arabidopsis thaliana reference genome.</title>
        <authorList>
            <person name="Cheng C.Y."/>
            <person name="Krishnakumar V."/>
            <person name="Chan A.P."/>
            <person name="Thibaud-Nissen F."/>
            <person name="Schobel S."/>
            <person name="Town C.D."/>
        </authorList>
    </citation>
    <scope>GENOME REANNOTATION</scope>
    <source>
        <strain>cv. Columbia</strain>
    </source>
</reference>
<reference key="6">
    <citation type="journal article" date="2003" name="Science">
        <title>Empirical analysis of transcriptional activity in the Arabidopsis genome.</title>
        <authorList>
            <person name="Yamada K."/>
            <person name="Lim J."/>
            <person name="Dale J.M."/>
            <person name="Chen H."/>
            <person name="Shinn P."/>
            <person name="Palm C.J."/>
            <person name="Southwick A.M."/>
            <person name="Wu H.C."/>
            <person name="Kim C.J."/>
            <person name="Nguyen M."/>
            <person name="Pham P.K."/>
            <person name="Cheuk R.F."/>
            <person name="Karlin-Newmann G."/>
            <person name="Liu S.X."/>
            <person name="Lam B."/>
            <person name="Sakano H."/>
            <person name="Wu T."/>
            <person name="Yu G."/>
            <person name="Miranda M."/>
            <person name="Quach H.L."/>
            <person name="Tripp M."/>
            <person name="Chang C.H."/>
            <person name="Lee J.M."/>
            <person name="Toriumi M.J."/>
            <person name="Chan M.M."/>
            <person name="Tang C.C."/>
            <person name="Onodera C.S."/>
            <person name="Deng J.M."/>
            <person name="Akiyama K."/>
            <person name="Ansari Y."/>
            <person name="Arakawa T."/>
            <person name="Banh J."/>
            <person name="Banno F."/>
            <person name="Bowser L."/>
            <person name="Brooks S.Y."/>
            <person name="Carninci P."/>
            <person name="Chao Q."/>
            <person name="Choy N."/>
            <person name="Enju A."/>
            <person name="Goldsmith A.D."/>
            <person name="Gurjal M."/>
            <person name="Hansen N.F."/>
            <person name="Hayashizaki Y."/>
            <person name="Johnson-Hopson C."/>
            <person name="Hsuan V.W."/>
            <person name="Iida K."/>
            <person name="Karnes M."/>
            <person name="Khan S."/>
            <person name="Koesema E."/>
            <person name="Ishida J."/>
            <person name="Jiang P.X."/>
            <person name="Jones T."/>
            <person name="Kawai J."/>
            <person name="Kamiya A."/>
            <person name="Meyers C."/>
            <person name="Nakajima M."/>
            <person name="Narusaka M."/>
            <person name="Seki M."/>
            <person name="Sakurai T."/>
            <person name="Satou M."/>
            <person name="Tamse R."/>
            <person name="Vaysberg M."/>
            <person name="Wallender E.K."/>
            <person name="Wong C."/>
            <person name="Yamamura Y."/>
            <person name="Yuan S."/>
            <person name="Shinozaki K."/>
            <person name="Davis R.W."/>
            <person name="Theologis A."/>
            <person name="Ecker J.R."/>
        </authorList>
    </citation>
    <scope>NUCLEOTIDE SEQUENCE [LARGE SCALE MRNA]</scope>
    <source>
        <strain>cv. Columbia</strain>
    </source>
</reference>
<reference key="7">
    <citation type="submission" date="2002-03" db="EMBL/GenBank/DDBJ databases">
        <title>Full-length cDNA from Arabidopsis thaliana.</title>
        <authorList>
            <person name="Brover V.V."/>
            <person name="Troukhan M.E."/>
            <person name="Alexandrov N.A."/>
            <person name="Lu Y.-P."/>
            <person name="Flavell R.B."/>
            <person name="Feldmann K.A."/>
        </authorList>
    </citation>
    <scope>NUCLEOTIDE SEQUENCE [LARGE SCALE MRNA]</scope>
</reference>
<reference key="8">
    <citation type="journal article" date="1993" name="Plant J.">
        <title>An inventory of 1152 expressed sequence tags obtained by partial sequencing of cDNAs from Arabidopsis thaliana.</title>
        <authorList>
            <person name="Hoefte H."/>
            <person name="Desprez T."/>
            <person name="Amselem J."/>
            <person name="Chiapello H."/>
            <person name="Rouze P."/>
            <person name="Caboche M."/>
            <person name="Moisan A."/>
            <person name="Jourjon M.-F."/>
            <person name="Charpenteau J.-L."/>
            <person name="Berthomieu P."/>
            <person name="Guerrier D."/>
            <person name="Giraudat J."/>
            <person name="Quigley F."/>
            <person name="Thomas F."/>
            <person name="Yu D.-Y."/>
            <person name="Mache R."/>
            <person name="Raynal M."/>
            <person name="Cooke R."/>
            <person name="Grellet F."/>
            <person name="Delseny M."/>
            <person name="Parmentier Y."/>
            <person name="de Marcillac G."/>
            <person name="Gigot C."/>
            <person name="Fleck J."/>
            <person name="Philipps G."/>
            <person name="Axelos M."/>
            <person name="Bardet C."/>
            <person name="Tremousaygue D."/>
            <person name="Lescure B."/>
        </authorList>
    </citation>
    <scope>NUCLEOTIDE SEQUENCE [LARGE SCALE MRNA] OF 1-67</scope>
    <source>
        <strain>cv. Columbia</strain>
    </source>
</reference>
<reference key="9">
    <citation type="journal article" date="2012" name="Mol. Cell. Proteomics">
        <title>Comparative large-scale characterisation of plant vs. mammal proteins reveals similar and idiosyncratic N-alpha acetylation features.</title>
        <authorList>
            <person name="Bienvenut W.V."/>
            <person name="Sumpton D."/>
            <person name="Martinez A."/>
            <person name="Lilla S."/>
            <person name="Espagne C."/>
            <person name="Meinnel T."/>
            <person name="Giglione C."/>
        </authorList>
    </citation>
    <scope>ACETYLATION [LARGE SCALE ANALYSIS] AT ALA-2</scope>
    <scope>CLEAVAGE OF INITIATOR METHIONINE [LARGE SCALE ANALYSIS]</scope>
    <scope>IDENTIFICATION BY MASS SPECTROMETRY [LARGE SCALE ANALYSIS]</scope>
</reference>
<evidence type="ECO:0000255" key="1">
    <source>
        <dbReference type="PROSITE-ProRule" id="PRU00388"/>
    </source>
</evidence>
<evidence type="ECO:0000255" key="2">
    <source>
        <dbReference type="PROSITE-ProRule" id="PRU10133"/>
    </source>
</evidence>
<evidence type="ECO:0000269" key="3">
    <source>
    </source>
</evidence>
<evidence type="ECO:0000269" key="4">
    <source>
    </source>
</evidence>
<evidence type="ECO:0007744" key="5">
    <source>
    </source>
</evidence>
<feature type="initiator methionine" description="Removed" evidence="5">
    <location>
        <position position="1"/>
    </location>
</feature>
<feature type="chain" id="PRO_0000082588" description="Ubiquitin-conjugating enzyme E2 14">
    <location>
        <begin position="2"/>
        <end position="167"/>
    </location>
</feature>
<feature type="domain" description="UBC core" evidence="1">
    <location>
        <begin position="5"/>
        <end position="165"/>
    </location>
</feature>
<feature type="active site" description="Glycyl thioester intermediate" evidence="1 2">
    <location>
        <position position="90"/>
    </location>
</feature>
<feature type="modified residue" description="N-acetylalanine" evidence="5">
    <location>
        <position position="2"/>
    </location>
</feature>
<name>UBC14_ARATH</name>
<protein>
    <recommendedName>
        <fullName>Ubiquitin-conjugating enzyme E2 14</fullName>
        <ecNumber>2.3.2.23</ecNumber>
    </recommendedName>
    <alternativeName>
        <fullName>E2 ubiquitin-conjugating enzyme 14</fullName>
    </alternativeName>
    <alternativeName>
        <fullName>TAYO29</fullName>
    </alternativeName>
    <alternativeName>
        <fullName>UbcAt3</fullName>
    </alternativeName>
    <alternativeName>
        <fullName>Ubiquitin carrier protein 14</fullName>
    </alternativeName>
    <alternativeName>
        <fullName>Ubiquitin-protein ligase 14</fullName>
    </alternativeName>
</protein>
<organism>
    <name type="scientific">Arabidopsis thaliana</name>
    <name type="common">Mouse-ear cress</name>
    <dbReference type="NCBI Taxonomy" id="3702"/>
    <lineage>
        <taxon>Eukaryota</taxon>
        <taxon>Viridiplantae</taxon>
        <taxon>Streptophyta</taxon>
        <taxon>Embryophyta</taxon>
        <taxon>Tracheophyta</taxon>
        <taxon>Spermatophyta</taxon>
        <taxon>Magnoliopsida</taxon>
        <taxon>eudicotyledons</taxon>
        <taxon>Gunneridae</taxon>
        <taxon>Pentapetalae</taxon>
        <taxon>rosids</taxon>
        <taxon>malvids</taxon>
        <taxon>Brassicales</taxon>
        <taxon>Brassicaceae</taxon>
        <taxon>Camelineae</taxon>
        <taxon>Arabidopsis</taxon>
    </lineage>
</organism>
<keyword id="KW-0007">Acetylation</keyword>
<keyword id="KW-0025">Alternative splicing</keyword>
<keyword id="KW-0067">ATP-binding</keyword>
<keyword id="KW-0547">Nucleotide-binding</keyword>
<keyword id="KW-1185">Reference proteome</keyword>
<keyword id="KW-0808">Transferase</keyword>
<keyword id="KW-0833">Ubl conjugation pathway</keyword>
<proteinExistence type="evidence at protein level"/>